<name>Y2787_BRUAB</name>
<dbReference type="EC" id="7.-.-.-"/>
<dbReference type="EMBL" id="AE017224">
    <property type="protein sequence ID" value="AAX75909.1"/>
    <property type="molecule type" value="Genomic_DNA"/>
</dbReference>
<dbReference type="RefSeq" id="WP_002965898.1">
    <property type="nucleotide sequence ID" value="NC_006933.1"/>
</dbReference>
<dbReference type="SMR" id="Q578M5"/>
<dbReference type="EnsemblBacteria" id="AAX75909">
    <property type="protein sequence ID" value="AAX75909"/>
    <property type="gene ID" value="BruAb2_0487"/>
</dbReference>
<dbReference type="KEGG" id="bmb:BruAb2_0487"/>
<dbReference type="HOGENOM" id="CLU_000604_1_1_5"/>
<dbReference type="Proteomes" id="UP000000540">
    <property type="component" value="Chromosome II"/>
</dbReference>
<dbReference type="GO" id="GO:0055052">
    <property type="term" value="C:ATP-binding cassette (ABC) transporter complex, substrate-binding subunit-containing"/>
    <property type="evidence" value="ECO:0007669"/>
    <property type="project" value="TreeGrafter"/>
</dbReference>
<dbReference type="GO" id="GO:0140359">
    <property type="term" value="F:ABC-type transporter activity"/>
    <property type="evidence" value="ECO:0007669"/>
    <property type="project" value="InterPro"/>
</dbReference>
<dbReference type="GO" id="GO:0005524">
    <property type="term" value="F:ATP binding"/>
    <property type="evidence" value="ECO:0007669"/>
    <property type="project" value="UniProtKB-KW"/>
</dbReference>
<dbReference type="GO" id="GO:0016887">
    <property type="term" value="F:ATP hydrolysis activity"/>
    <property type="evidence" value="ECO:0007669"/>
    <property type="project" value="InterPro"/>
</dbReference>
<dbReference type="GO" id="GO:0008643">
    <property type="term" value="P:carbohydrate transport"/>
    <property type="evidence" value="ECO:0007669"/>
    <property type="project" value="InterPro"/>
</dbReference>
<dbReference type="CDD" id="cd03301">
    <property type="entry name" value="ABC_MalK_N"/>
    <property type="match status" value="1"/>
</dbReference>
<dbReference type="FunFam" id="3.40.50.300:FF:000042">
    <property type="entry name" value="Maltose/maltodextrin ABC transporter, ATP-binding protein"/>
    <property type="match status" value="1"/>
</dbReference>
<dbReference type="Gene3D" id="2.40.50.100">
    <property type="match status" value="1"/>
</dbReference>
<dbReference type="Gene3D" id="2.40.50.140">
    <property type="entry name" value="Nucleic acid-binding proteins"/>
    <property type="match status" value="1"/>
</dbReference>
<dbReference type="Gene3D" id="3.40.50.300">
    <property type="entry name" value="P-loop containing nucleotide triphosphate hydrolases"/>
    <property type="match status" value="1"/>
</dbReference>
<dbReference type="InterPro" id="IPR003593">
    <property type="entry name" value="AAA+_ATPase"/>
</dbReference>
<dbReference type="InterPro" id="IPR003439">
    <property type="entry name" value="ABC_transporter-like_ATP-bd"/>
</dbReference>
<dbReference type="InterPro" id="IPR017871">
    <property type="entry name" value="ABC_transporter-like_CS"/>
</dbReference>
<dbReference type="InterPro" id="IPR015855">
    <property type="entry name" value="ABC_transpr_MalK-like"/>
</dbReference>
<dbReference type="InterPro" id="IPR047641">
    <property type="entry name" value="ABC_transpr_MalK/UgpC-like"/>
</dbReference>
<dbReference type="InterPro" id="IPR008995">
    <property type="entry name" value="Mo/tungstate-bd_C_term_dom"/>
</dbReference>
<dbReference type="InterPro" id="IPR012340">
    <property type="entry name" value="NA-bd_OB-fold"/>
</dbReference>
<dbReference type="InterPro" id="IPR027417">
    <property type="entry name" value="P-loop_NTPase"/>
</dbReference>
<dbReference type="InterPro" id="IPR013611">
    <property type="entry name" value="Transp-assoc_OB_typ2"/>
</dbReference>
<dbReference type="NCBIfam" id="NF008653">
    <property type="entry name" value="PRK11650.1"/>
    <property type="match status" value="1"/>
</dbReference>
<dbReference type="PANTHER" id="PTHR43875:SF10">
    <property type="entry name" value="BLL2173 PROTEIN"/>
    <property type="match status" value="1"/>
</dbReference>
<dbReference type="PANTHER" id="PTHR43875">
    <property type="entry name" value="MALTODEXTRIN IMPORT ATP-BINDING PROTEIN MSMX"/>
    <property type="match status" value="1"/>
</dbReference>
<dbReference type="Pfam" id="PF00005">
    <property type="entry name" value="ABC_tran"/>
    <property type="match status" value="1"/>
</dbReference>
<dbReference type="Pfam" id="PF08402">
    <property type="entry name" value="TOBE_2"/>
    <property type="match status" value="1"/>
</dbReference>
<dbReference type="SMART" id="SM00382">
    <property type="entry name" value="AAA"/>
    <property type="match status" value="1"/>
</dbReference>
<dbReference type="SUPFAM" id="SSF50331">
    <property type="entry name" value="MOP-like"/>
    <property type="match status" value="1"/>
</dbReference>
<dbReference type="SUPFAM" id="SSF52540">
    <property type="entry name" value="P-loop containing nucleoside triphosphate hydrolases"/>
    <property type="match status" value="1"/>
</dbReference>
<dbReference type="PROSITE" id="PS00211">
    <property type="entry name" value="ABC_TRANSPORTER_1"/>
    <property type="match status" value="1"/>
</dbReference>
<dbReference type="PROSITE" id="PS50893">
    <property type="entry name" value="ABC_TRANSPORTER_2"/>
    <property type="match status" value="1"/>
</dbReference>
<accession>Q578M5</accession>
<protein>
    <recommendedName>
        <fullName>Putative ATP-binding protein BruAb2_0487</fullName>
        <ecNumber>7.-.-.-</ecNumber>
    </recommendedName>
</protein>
<sequence length="350" mass="37984">MKEVSLRGISKTFGQLTVLDRIDLEIHSGEFLVLVGPSGCGKSTLLRMVAGLEPISGGDLVIGGERANELPPQKRNIAMVFQSYALFPHMTARENIGFGPRIRGEKAAETAAKVDHAASILNLHSYLDRYPRQLSGGQRQRVAMGRAIVREPSVFLFDEPLSNLDAQLRVQMRTEIKALHQRLKSTVIYVTHDQIEAMTMADRIVVMNQGKIQQIGAPLDLYDRPANKFVAGFIGSPSMSFIPGTVADGFFCTGEGEKIAVSAAAKGARAAEAGIRPENFVIAREGAGLTLVVEVIEPTGPETHIYGRIAGEPVRAVFRERIQLAPGEQVPVTAGSEHIHLFDKESGLPL</sequence>
<proteinExistence type="inferred from homology"/>
<keyword id="KW-0067">ATP-binding</keyword>
<keyword id="KW-0997">Cell inner membrane</keyword>
<keyword id="KW-1003">Cell membrane</keyword>
<keyword id="KW-0472">Membrane</keyword>
<keyword id="KW-0547">Nucleotide-binding</keyword>
<keyword id="KW-1278">Translocase</keyword>
<keyword id="KW-0813">Transport</keyword>
<organism>
    <name type="scientific">Brucella abortus biovar 1 (strain 9-941)</name>
    <dbReference type="NCBI Taxonomy" id="262698"/>
    <lineage>
        <taxon>Bacteria</taxon>
        <taxon>Pseudomonadati</taxon>
        <taxon>Pseudomonadota</taxon>
        <taxon>Alphaproteobacteria</taxon>
        <taxon>Hyphomicrobiales</taxon>
        <taxon>Brucellaceae</taxon>
        <taxon>Brucella/Ochrobactrum group</taxon>
        <taxon>Brucella</taxon>
    </lineage>
</organism>
<evidence type="ECO:0000255" key="1">
    <source>
        <dbReference type="PROSITE-ProRule" id="PRU00434"/>
    </source>
</evidence>
<evidence type="ECO:0000305" key="2"/>
<reference key="1">
    <citation type="journal article" date="2005" name="J. Bacteriol.">
        <title>Completion of the genome sequence of Brucella abortus and comparison to the highly similar genomes of Brucella melitensis and Brucella suis.</title>
        <authorList>
            <person name="Halling S.M."/>
            <person name="Peterson-Burch B.D."/>
            <person name="Bricker B.J."/>
            <person name="Zuerner R.L."/>
            <person name="Qing Z."/>
            <person name="Li L.-L."/>
            <person name="Kapur V."/>
            <person name="Alt D.P."/>
            <person name="Olsen S.C."/>
        </authorList>
    </citation>
    <scope>NUCLEOTIDE SEQUENCE [LARGE SCALE GENOMIC DNA]</scope>
    <source>
        <strain>9-941</strain>
    </source>
</reference>
<gene>
    <name type="ordered locus">BruAb2_0487</name>
</gene>
<feature type="chain" id="PRO_0000281200" description="Putative ATP-binding protein BruAb2_0487">
    <location>
        <begin position="1"/>
        <end position="350"/>
    </location>
</feature>
<feature type="domain" description="ABC transporter" evidence="1">
    <location>
        <begin position="4"/>
        <end position="234"/>
    </location>
</feature>
<feature type="binding site" evidence="1">
    <location>
        <begin position="36"/>
        <end position="43"/>
    </location>
    <ligand>
        <name>ATP</name>
        <dbReference type="ChEBI" id="CHEBI:30616"/>
    </ligand>
</feature>
<comment type="function">
    <text evidence="2">Probably part of an ABC transporter complex. Probably responsible for energy coupling to the transport system (Probable).</text>
</comment>
<comment type="subunit">
    <text evidence="2">The complex is composed of two ATP-binding proteins (BruAb2_0487), two transmembrane proteins (BruAb2_0483) and a solute-binding protein (BruAb2_0484).</text>
</comment>
<comment type="subcellular location">
    <subcellularLocation>
        <location evidence="2">Cell inner membrane</location>
        <topology evidence="2">Peripheral membrane protein</topology>
    </subcellularLocation>
</comment>
<comment type="similarity">
    <text evidence="2">Belongs to the ABC transporter superfamily.</text>
</comment>